<protein>
    <recommendedName>
        <fullName evidence="5">CRISPR system single-strand-specific deoxyribonuclease Cas10/Csm1 (subtype III-A)</fullName>
        <shortName>ssDNase Cas10</shortName>
        <ecNumber evidence="4">3.1.-.-</ecNumber>
    </recommendedName>
    <alternativeName>
        <fullName>Cyclic oligoadenylate synthase</fullName>
        <ecNumber evidence="1">2.7.7.-</ecNumber>
    </alternativeName>
    <alternativeName>
        <fullName evidence="5">ToCsm1</fullName>
    </alternativeName>
</protein>
<name>CAS10_THEON</name>
<evidence type="ECO:0000250" key="1">
    <source>
        <dbReference type="UniProtKB" id="A0A0A7HFE1"/>
    </source>
</evidence>
<evidence type="ECO:0000255" key="2">
    <source>
        <dbReference type="PROSITE-ProRule" id="PRU00095"/>
    </source>
</evidence>
<evidence type="ECO:0000255" key="3">
    <source>
        <dbReference type="PROSITE-ProRule" id="PRU01175"/>
    </source>
</evidence>
<evidence type="ECO:0000269" key="4">
    <source>
    </source>
</evidence>
<evidence type="ECO:0000303" key="5">
    <source>
    </source>
</evidence>
<evidence type="ECO:0000305" key="6"/>
<evidence type="ECO:0000305" key="7">
    <source>
    </source>
</evidence>
<evidence type="ECO:0007744" key="8">
    <source>
        <dbReference type="PDB" id="4UW2"/>
    </source>
</evidence>
<evidence type="ECO:0007829" key="9">
    <source>
        <dbReference type="PDB" id="4UW2"/>
    </source>
</evidence>
<evidence type="ECO:0007829" key="10">
    <source>
        <dbReference type="PDB" id="6KBD"/>
    </source>
</evidence>
<evidence type="ECO:0007829" key="11">
    <source>
        <dbReference type="PDB" id="6KC0"/>
    </source>
</evidence>
<evidence type="ECO:0007829" key="12">
    <source>
        <dbReference type="PDB" id="6MUR"/>
    </source>
</evidence>
<evidence type="ECO:0007829" key="13">
    <source>
        <dbReference type="PDB" id="6MUT"/>
    </source>
</evidence>
<evidence type="ECO:0007829" key="14">
    <source>
        <dbReference type="PDB" id="6MUU"/>
    </source>
</evidence>
<evidence type="ECO:0007829" key="15">
    <source>
        <dbReference type="PDB" id="6O75"/>
    </source>
</evidence>
<evidence type="ECO:0007829" key="16">
    <source>
        <dbReference type="PDB" id="6O7B"/>
    </source>
</evidence>
<evidence type="ECO:0007829" key="17">
    <source>
        <dbReference type="PDB" id="6O7D"/>
    </source>
</evidence>
<evidence type="ECO:0007829" key="18">
    <source>
        <dbReference type="PDB" id="6O7H"/>
    </source>
</evidence>
<evidence type="ECO:0007829" key="19">
    <source>
        <dbReference type="PDB" id="6O7I"/>
    </source>
</evidence>
<dbReference type="EC" id="3.1.-.-" evidence="4"/>
<dbReference type="EC" id="2.7.7.-" evidence="1"/>
<dbReference type="EMBL" id="CP000855">
    <property type="protein sequence ID" value="ACJ16381.1"/>
    <property type="molecule type" value="Genomic_DNA"/>
</dbReference>
<dbReference type="RefSeq" id="WP_012571853.1">
    <property type="nucleotide sequence ID" value="NC_011529.1"/>
</dbReference>
<dbReference type="PDB" id="4UW2">
    <property type="method" value="X-ray"/>
    <property type="resolution" value="2.63 A"/>
    <property type="chains" value="A/B/C/D=1-777"/>
</dbReference>
<dbReference type="PDB" id="6IQW">
    <property type="method" value="EM"/>
    <property type="resolution" value="3.35 A"/>
    <property type="chains" value="A=1-777"/>
</dbReference>
<dbReference type="PDB" id="6KBD">
    <property type="method" value="X-ray"/>
    <property type="resolution" value="3.00 A"/>
    <property type="chains" value="A=1-500"/>
</dbReference>
<dbReference type="PDB" id="6KC0">
    <property type="method" value="X-ray"/>
    <property type="resolution" value="2.29 A"/>
    <property type="chains" value="A=1-500"/>
</dbReference>
<dbReference type="PDB" id="6MUA">
    <property type="method" value="X-ray"/>
    <property type="resolution" value="2.91 A"/>
    <property type="chains" value="A=1-777"/>
</dbReference>
<dbReference type="PDB" id="6MUR">
    <property type="method" value="EM"/>
    <property type="resolution" value="3.10 A"/>
    <property type="chains" value="A=1-777"/>
</dbReference>
<dbReference type="PDB" id="6MUS">
    <property type="method" value="EM"/>
    <property type="resolution" value="3.60 A"/>
    <property type="chains" value="A=1-777"/>
</dbReference>
<dbReference type="PDB" id="6MUT">
    <property type="method" value="EM"/>
    <property type="resolution" value="3.10 A"/>
    <property type="chains" value="A=1-777"/>
</dbReference>
<dbReference type="PDB" id="6MUU">
    <property type="method" value="EM"/>
    <property type="resolution" value="3.00 A"/>
    <property type="chains" value="A=1-777"/>
</dbReference>
<dbReference type="PDB" id="6O73">
    <property type="method" value="X-ray"/>
    <property type="resolution" value="3.00 A"/>
    <property type="chains" value="A=1-777"/>
</dbReference>
<dbReference type="PDB" id="6O74">
    <property type="method" value="X-ray"/>
    <property type="resolution" value="2.71 A"/>
    <property type="chains" value="A=1-777"/>
</dbReference>
<dbReference type="PDB" id="6O75">
    <property type="method" value="X-ray"/>
    <property type="resolution" value="2.60 A"/>
    <property type="chains" value="A=1-777"/>
</dbReference>
<dbReference type="PDB" id="6O78">
    <property type="method" value="X-ray"/>
    <property type="resolution" value="2.80 A"/>
    <property type="chains" value="A=1-777"/>
</dbReference>
<dbReference type="PDB" id="6O79">
    <property type="method" value="X-ray"/>
    <property type="resolution" value="3.00 A"/>
    <property type="chains" value="A=1-777"/>
</dbReference>
<dbReference type="PDB" id="6O7B">
    <property type="method" value="X-ray"/>
    <property type="resolution" value="2.40 A"/>
    <property type="chains" value="A=1-777"/>
</dbReference>
<dbReference type="PDB" id="6O7D">
    <property type="method" value="X-ray"/>
    <property type="resolution" value="2.81 A"/>
    <property type="chains" value="A=1-777"/>
</dbReference>
<dbReference type="PDB" id="6O7E">
    <property type="method" value="EM"/>
    <property type="resolution" value="3.20 A"/>
    <property type="chains" value="A=1-777"/>
</dbReference>
<dbReference type="PDB" id="6O7H">
    <property type="method" value="EM"/>
    <property type="resolution" value="2.90 A"/>
    <property type="chains" value="A=1-777"/>
</dbReference>
<dbReference type="PDB" id="6O7I">
    <property type="method" value="EM"/>
    <property type="resolution" value="3.20 A"/>
    <property type="chains" value="A=1-777"/>
</dbReference>
<dbReference type="PDBsum" id="4UW2"/>
<dbReference type="PDBsum" id="6IQW"/>
<dbReference type="PDBsum" id="6KBD"/>
<dbReference type="PDBsum" id="6KC0"/>
<dbReference type="PDBsum" id="6MUA"/>
<dbReference type="PDBsum" id="6MUR"/>
<dbReference type="PDBsum" id="6MUS"/>
<dbReference type="PDBsum" id="6MUT"/>
<dbReference type="PDBsum" id="6MUU"/>
<dbReference type="PDBsum" id="6O73"/>
<dbReference type="PDBsum" id="6O74"/>
<dbReference type="PDBsum" id="6O75"/>
<dbReference type="PDBsum" id="6O78"/>
<dbReference type="PDBsum" id="6O79"/>
<dbReference type="PDBsum" id="6O7B"/>
<dbReference type="PDBsum" id="6O7D"/>
<dbReference type="PDBsum" id="6O7E"/>
<dbReference type="PDBsum" id="6O7H"/>
<dbReference type="PDBsum" id="6O7I"/>
<dbReference type="EMDB" id="EMD-0640"/>
<dbReference type="EMDB" id="EMD-0641"/>
<dbReference type="EMDB" id="EMD-0642"/>
<dbReference type="EMDB" id="EMD-9253"/>
<dbReference type="EMDB" id="EMD-9254"/>
<dbReference type="EMDB" id="EMD-9255"/>
<dbReference type="EMDB" id="EMD-9256"/>
<dbReference type="EMDB" id="EMD-9708"/>
<dbReference type="SMR" id="B6YWB8"/>
<dbReference type="DIP" id="DIP-61404N"/>
<dbReference type="IntAct" id="B6YWB8">
    <property type="interactions" value="1"/>
</dbReference>
<dbReference type="STRING" id="523850.TON_0893"/>
<dbReference type="GeneID" id="7017196"/>
<dbReference type="KEGG" id="ton:TON_0893"/>
<dbReference type="PATRIC" id="fig|523850.10.peg.901"/>
<dbReference type="eggNOG" id="arCOG02666">
    <property type="taxonomic scope" value="Archaea"/>
</dbReference>
<dbReference type="HOGENOM" id="CLU_017487_1_0_2"/>
<dbReference type="OrthoDB" id="57429at2157"/>
<dbReference type="EvolutionaryTrace" id="B6YWB8"/>
<dbReference type="Proteomes" id="UP000002727">
    <property type="component" value="Chromosome"/>
</dbReference>
<dbReference type="GO" id="GO:0005524">
    <property type="term" value="F:ATP binding"/>
    <property type="evidence" value="ECO:0007669"/>
    <property type="project" value="UniProtKB-KW"/>
</dbReference>
<dbReference type="GO" id="GO:0004519">
    <property type="term" value="F:endonuclease activity"/>
    <property type="evidence" value="ECO:0007669"/>
    <property type="project" value="UniProtKB-KW"/>
</dbReference>
<dbReference type="GO" id="GO:0004527">
    <property type="term" value="F:exonuclease activity"/>
    <property type="evidence" value="ECO:0007669"/>
    <property type="project" value="UniProtKB-KW"/>
</dbReference>
<dbReference type="GO" id="GO:0042802">
    <property type="term" value="F:identical protein binding"/>
    <property type="evidence" value="ECO:0000353"/>
    <property type="project" value="IntAct"/>
</dbReference>
<dbReference type="GO" id="GO:0016740">
    <property type="term" value="F:transferase activity"/>
    <property type="evidence" value="ECO:0007669"/>
    <property type="project" value="UniProtKB-KW"/>
</dbReference>
<dbReference type="GO" id="GO:0051607">
    <property type="term" value="P:defense response to virus"/>
    <property type="evidence" value="ECO:0007669"/>
    <property type="project" value="UniProtKB-KW"/>
</dbReference>
<dbReference type="CDD" id="cd09680">
    <property type="entry name" value="Cas10_III"/>
    <property type="match status" value="1"/>
</dbReference>
<dbReference type="Gene3D" id="3.30.70.270">
    <property type="match status" value="1"/>
</dbReference>
<dbReference type="InterPro" id="IPR054767">
    <property type="entry name" value="Cas10-Cmr2_palm2"/>
</dbReference>
<dbReference type="InterPro" id="IPR013408">
    <property type="entry name" value="Cas10/Csm1"/>
</dbReference>
<dbReference type="InterPro" id="IPR052117">
    <property type="entry name" value="Cas10/Csm1_subtype-III-A"/>
</dbReference>
<dbReference type="InterPro" id="IPR041062">
    <property type="entry name" value="Csm1_B"/>
</dbReference>
<dbReference type="InterPro" id="IPR000160">
    <property type="entry name" value="GGDEF_dom"/>
</dbReference>
<dbReference type="InterPro" id="IPR006674">
    <property type="entry name" value="HD_domain"/>
</dbReference>
<dbReference type="InterPro" id="IPR043128">
    <property type="entry name" value="Rev_trsase/Diguanyl_cyclase"/>
</dbReference>
<dbReference type="NCBIfam" id="TIGR02578">
    <property type="entry name" value="cas_TM1811_Csm1"/>
    <property type="match status" value="1"/>
</dbReference>
<dbReference type="PANTHER" id="PTHR36528">
    <property type="entry name" value="CRISPR SYSTEM SINGLE-STRAND-SPECIFIC DEOXYRIBONUCLEASE CAS10/CSM1 (SUBTYPE III-A)"/>
    <property type="match status" value="1"/>
</dbReference>
<dbReference type="PANTHER" id="PTHR36528:SF1">
    <property type="entry name" value="CRISPR SYSTEM SINGLE-STRAND-SPECIFIC DEOXYRIBONUCLEASE CAS10_CSM1 (SUBTYPE III-A)"/>
    <property type="match status" value="1"/>
</dbReference>
<dbReference type="Pfam" id="PF22335">
    <property type="entry name" value="Cas10-Cmr2_palm2"/>
    <property type="match status" value="1"/>
</dbReference>
<dbReference type="Pfam" id="PF18211">
    <property type="entry name" value="Csm1_B"/>
    <property type="match status" value="1"/>
</dbReference>
<dbReference type="Pfam" id="PF01966">
    <property type="entry name" value="HD"/>
    <property type="match status" value="1"/>
</dbReference>
<dbReference type="SUPFAM" id="SSF109604">
    <property type="entry name" value="HD-domain/PDEase-like"/>
    <property type="match status" value="1"/>
</dbReference>
<dbReference type="PROSITE" id="PS50887">
    <property type="entry name" value="GGDEF"/>
    <property type="match status" value="1"/>
</dbReference>
<dbReference type="PROSITE" id="PS51831">
    <property type="entry name" value="HD"/>
    <property type="match status" value="1"/>
</dbReference>
<keyword id="KW-0002">3D-structure</keyword>
<keyword id="KW-0051">Antiviral defense</keyword>
<keyword id="KW-0067">ATP-binding</keyword>
<keyword id="KW-0255">Endonuclease</keyword>
<keyword id="KW-0269">Exonuclease</keyword>
<keyword id="KW-0378">Hydrolase</keyword>
<keyword id="KW-0540">Nuclease</keyword>
<keyword id="KW-0547">Nucleotide-binding</keyword>
<keyword id="KW-0808">Transferase</keyword>
<organism>
    <name type="scientific">Thermococcus onnurineus (strain NA1)</name>
    <dbReference type="NCBI Taxonomy" id="523850"/>
    <lineage>
        <taxon>Archaea</taxon>
        <taxon>Methanobacteriati</taxon>
        <taxon>Methanobacteriota</taxon>
        <taxon>Thermococci</taxon>
        <taxon>Thermococcales</taxon>
        <taxon>Thermococcaceae</taxon>
        <taxon>Thermococcus</taxon>
    </lineage>
</organism>
<gene>
    <name evidence="5" type="primary">csm1</name>
    <name evidence="6" type="synonym">cas10</name>
    <name type="ordered locus">TON_0893</name>
</gene>
<accession>B6YWB8</accession>
<proteinExistence type="evidence at protein level"/>
<sequence>MEIDELTALGGLLHDIGKPVQRAGLYSGDHSTQGARFLRDLAENTGRAEYELLSLFSEFHHKGHMKNDELMIRRIKELSPERFGLTMEDVLNALWIVYEADNLASGEREEGQPQASRPLYSVFNPGKAYPWAELDFEKELPVPGDVFSIRSQDYRELVKRLWEELSKAKLRSDRLLPVLEKYLTFVSSVTSEGNIISLYDHMRMTSAIALAMLRAGCTAEDVRSGRCRKEKRFLLIEGDFSGIQDFIYRVSGKGTLKYLRARSAYLELIGWDVVLEILSRLGLTRANVVFNAGGHFMIIAQNTPDAVKELEEIRAKAVEWLYREFESDLYLAIEWEPVSGREFGREGGKNLFAEARKRLKHKLTVRKLKRFGEIKGLFEHGHTERLAECPVCGRELPEGKLEPSASDPETKVCPTCNRLVSLGGNLPKLLGFGRTAKNDAGVLVEGPFSGFVPYLQGGRPVGEQILVKNTLNPGEIPESAQFVPYFVADYFKKDPKGGVATFEELSMASTGTRRLGVMKGDVDRLGEFFSSMDSPSKLATASRFMDYFFKGYIGAIIEGKFGYIIGDVPSLRDWPEEPDIVVVYAGGDDFFIVGAWDQIFELAFRVRRAFNAYTGGKLTLSVGLGYFDERTPIYRMADVVSERLDTAKDEGRNRVFVVGRSRPLDGKHKLSYEWNHYEELWRTYAPRIYAGNGRLKGKLESKKGLLWKLLEIRELYVRDPNDVRWAYLTAYLLGRHGLSDLFPELVGIDTKAVERKEPQPVYWVDGVLKIVLMAVRR</sequence>
<comment type="function">
    <text evidence="1">CRISPR (clustered regularly interspaced short palindromic repeat) is an adaptive immune system that provides protection against mobile genetic elements (viruses, transposable elements and conjugative plasmids). CRISPR clusters contain spacers, sequences complementary to antecedent mobile elements, and target invading nucleic acids. CRISPR clusters are transcribed and processed into CRISPR RNA (crRNA). The type III-A Csm effector complex binds crRNA and acts as a crRNA-guided RNase, DNase and cyclic oligoadenylate synthase; binding of target RNA cognate to the crRNA is required for all activities.</text>
</comment>
<comment type="function">
    <text evidence="4">A single-strand deoxyribonuclease (ssDNase) which digests linear and circular ssDNA; has 5'-3' and 3'-5' exonuclease activity as well as a less efficient endonuclease activity. Has a minimal size requirement; 100 nucleotide ssDNA (nt) is more efficiently digested than 50 or 25 nt ssDNA, while 14 nt ssDNA is not cleaved at all. It has no activity on dsDNA or ssRNA.</text>
</comment>
<comment type="function">
    <text evidence="1">ssDNase activity is stimulated in the ternary Csm effector complex; binding of cognate target RNA activates the ssDNase, as the target RNA is degraded ssDNA activity decreases.</text>
</comment>
<comment type="function">
    <text evidence="1">When associated with the ternary Csm effector complex (the crRNA, Cas proteins and a cognate target ssRNA) synthesizes cyclic oligoadenylates (cOA) from ATP. cOAs are second messengers that stimulate the ssRNase activity of Csm6, inducing an antiviral state important for defense against invading nucleic acids.</text>
</comment>
<comment type="cofactor">
    <cofactor evidence="4">
        <name>a divalent metal cation</name>
        <dbReference type="ChEBI" id="CHEBI:60240"/>
    </cofactor>
    <text evidence="4">Ni(2+) and Mn(2+), but not Mg(2+), Ca(2+), Zn(2+), Co(2+), or Cu(2+), is required for ssDNase activity.</text>
</comment>
<comment type="activity regulation">
    <text evidence="4">ssDNase activity is inhibited by EDTA.</text>
</comment>
<comment type="subunit">
    <text evidence="1 4">Probably part of the Csm effector complex, that includes Cas10, Csm2, Csm3, Csm4, Csm5 and mature crRNA (By similarity). Will form a homodimer in solution, interacts with Csm4, which is a tighter, better association than the homodimeric Cas10 and uses the same interface for interaction (PubMed:25773141).</text>
</comment>
<comment type="interaction">
    <interactant intactId="EBI-16149952">
        <id>B6YWB8</id>
    </interactant>
    <interactant intactId="EBI-16149952">
        <id>B6YWB8</id>
        <label>csm1</label>
    </interactant>
    <organismsDiffer>false</organismsDiffer>
    <experiments>3</experiments>
</comment>
<comment type="interaction">
    <interactant intactId="EBI-16149952">
        <id>B6YWB8</id>
    </interactant>
    <interactant intactId="EBI-16149979">
        <id>B6YWC1</id>
        <label>csm4</label>
    </interactant>
    <organismsDiffer>false</organismsDiffer>
    <experiments>2</experiments>
</comment>
<comment type="domain">
    <text evidence="1 4">The N-terminal HD domain has ssDNase activity (PubMed:25773141). The C-terminal GGDEF domain has the cOA synthesis activity (By similarity).</text>
</comment>
<comment type="miscellaneous">
    <text evidence="7">Encoded in a type III-A CRISPR locus.</text>
</comment>
<comment type="similarity">
    <text evidence="6">Belongs to the CRISPR-associated Cas10/Csm1 family.</text>
</comment>
<reference key="1">
    <citation type="journal article" date="2008" name="J. Bacteriol.">
        <title>The complete genome sequence of Thermococcus onnurineus NA1 reveals a mixed heterotrophic and carboxydotrophic metabolism.</title>
        <authorList>
            <person name="Lee H.S."/>
            <person name="Kang S.G."/>
            <person name="Bae S.S."/>
            <person name="Lim J.K."/>
            <person name="Cho Y."/>
            <person name="Kim Y.J."/>
            <person name="Jeon J.H."/>
            <person name="Cha S.-S."/>
            <person name="Kwon K.K."/>
            <person name="Kim H.-T."/>
            <person name="Park C.-J."/>
            <person name="Lee H.-W."/>
            <person name="Kim S.I."/>
            <person name="Chun J."/>
            <person name="Colwell R.R."/>
            <person name="Kim S.-J."/>
            <person name="Lee J.-H."/>
        </authorList>
    </citation>
    <scope>NUCLEOTIDE SEQUENCE [LARGE SCALE GENOMIC DNA]</scope>
    <source>
        <strain>NA1</strain>
    </source>
</reference>
<reference evidence="8" key="2">
    <citation type="journal article" date="2015" name="Structure">
        <title>Crystal structure of the Csm1 subunit of the Csm complex and its single-stranded DNA-specific nuclease activity.</title>
        <authorList>
            <person name="Jung T.Y."/>
            <person name="An Y."/>
            <person name="Park K.H."/>
            <person name="Lee M.H."/>
            <person name="Oh B.H."/>
            <person name="Woo E."/>
        </authorList>
    </citation>
    <scope>X-RAY CRYSTALLOGRAPHY (2.63 ANGSTROMS)</scope>
    <scope>FUNCTION AS DNASE</scope>
    <scope>COFACTOR</scope>
    <scope>ACTIVITY REGULATION</scope>
    <scope>SUBUNIT</scope>
    <scope>INTERACTION WITH CSM4</scope>
    <scope>DOMAIN</scope>
    <scope>MUTAGENESIS OF ASP-15</scope>
    <source>
        <strain>NA1</strain>
    </source>
</reference>
<feature type="chain" id="PRO_0000446114" description="CRISPR system single-strand-specific deoxyribonuclease Cas10/Csm1 (subtype III-A)">
    <location>
        <begin position="1"/>
        <end position="777"/>
    </location>
</feature>
<feature type="domain" description="HD" evidence="3">
    <location>
        <begin position="1"/>
        <end position="106"/>
    </location>
</feature>
<feature type="domain" description="GGDEF" evidence="2">
    <location>
        <begin position="513"/>
        <end position="660"/>
    </location>
</feature>
<feature type="mutagenesis site" description="Loss of ssDNase activity." evidence="4">
    <original>D</original>
    <variation>N</variation>
    <location>
        <position position="15"/>
    </location>
</feature>
<feature type="helix" evidence="11">
    <location>
        <begin position="3"/>
        <end position="13"/>
    </location>
</feature>
<feature type="turn" evidence="11">
    <location>
        <begin position="14"/>
        <end position="16"/>
    </location>
</feature>
<feature type="helix" evidence="11">
    <location>
        <begin position="17"/>
        <end position="23"/>
    </location>
</feature>
<feature type="strand" evidence="11">
    <location>
        <begin position="26"/>
        <end position="28"/>
    </location>
</feature>
<feature type="helix" evidence="11">
    <location>
        <begin position="30"/>
        <end position="45"/>
    </location>
</feature>
<feature type="helix" evidence="11">
    <location>
        <begin position="49"/>
        <end position="58"/>
    </location>
</feature>
<feature type="helix" evidence="14">
    <location>
        <begin position="62"/>
        <end position="65"/>
    </location>
</feature>
<feature type="helix" evidence="11">
    <location>
        <begin position="69"/>
        <end position="78"/>
    </location>
</feature>
<feature type="helix" evidence="11">
    <location>
        <begin position="80"/>
        <end position="83"/>
    </location>
</feature>
<feature type="helix" evidence="11">
    <location>
        <begin position="87"/>
        <end position="103"/>
    </location>
</feature>
<feature type="strand" evidence="13">
    <location>
        <begin position="107"/>
        <end position="109"/>
    </location>
</feature>
<feature type="strand" evidence="14">
    <location>
        <begin position="122"/>
        <end position="124"/>
    </location>
</feature>
<feature type="strand" evidence="18">
    <location>
        <begin position="127"/>
        <end position="129"/>
    </location>
</feature>
<feature type="strand" evidence="11">
    <location>
        <begin position="134"/>
        <end position="137"/>
    </location>
</feature>
<feature type="helix" evidence="11">
    <location>
        <begin position="151"/>
        <end position="167"/>
    </location>
</feature>
<feature type="helix" evidence="11">
    <location>
        <begin position="172"/>
        <end position="183"/>
    </location>
</feature>
<feature type="strand" evidence="11">
    <location>
        <begin position="186"/>
        <end position="189"/>
    </location>
</feature>
<feature type="helix" evidence="11">
    <location>
        <begin position="198"/>
        <end position="214"/>
    </location>
</feature>
<feature type="helix" evidence="11">
    <location>
        <begin position="219"/>
        <end position="223"/>
    </location>
</feature>
<feature type="helix" evidence="11">
    <location>
        <begin position="226"/>
        <end position="229"/>
    </location>
</feature>
<feature type="strand" evidence="11">
    <location>
        <begin position="233"/>
        <end position="241"/>
    </location>
</feature>
<feature type="helix" evidence="11">
    <location>
        <begin position="243"/>
        <end position="248"/>
    </location>
</feature>
<feature type="strand" evidence="14">
    <location>
        <begin position="252"/>
        <end position="254"/>
    </location>
</feature>
<feature type="helix" evidence="11">
    <location>
        <begin position="256"/>
        <end position="281"/>
    </location>
</feature>
<feature type="helix" evidence="11">
    <location>
        <begin position="285"/>
        <end position="287"/>
    </location>
</feature>
<feature type="strand" evidence="11">
    <location>
        <begin position="288"/>
        <end position="291"/>
    </location>
</feature>
<feature type="strand" evidence="11">
    <location>
        <begin position="293"/>
        <end position="301"/>
    </location>
</feature>
<feature type="helix" evidence="11">
    <location>
        <begin position="304"/>
        <end position="325"/>
    </location>
</feature>
<feature type="strand" evidence="11">
    <location>
        <begin position="328"/>
        <end position="338"/>
    </location>
</feature>
<feature type="helix" evidence="11">
    <location>
        <begin position="340"/>
        <end position="343"/>
    </location>
</feature>
<feature type="turn" evidence="11">
    <location>
        <begin position="346"/>
        <end position="349"/>
    </location>
</feature>
<feature type="helix" evidence="11">
    <location>
        <begin position="351"/>
        <end position="368"/>
    </location>
</feature>
<feature type="turn" evidence="16">
    <location>
        <begin position="370"/>
        <end position="373"/>
    </location>
</feature>
<feature type="helix" evidence="16">
    <location>
        <begin position="375"/>
        <end position="378"/>
    </location>
</feature>
<feature type="strand" evidence="18">
    <location>
        <begin position="384"/>
        <end position="388"/>
    </location>
</feature>
<feature type="turn" evidence="11">
    <location>
        <begin position="390"/>
        <end position="392"/>
    </location>
</feature>
<feature type="strand" evidence="18">
    <location>
        <begin position="395"/>
        <end position="397"/>
    </location>
</feature>
<feature type="strand" evidence="12">
    <location>
        <begin position="401"/>
        <end position="403"/>
    </location>
</feature>
<feature type="strand" evidence="19">
    <location>
        <begin position="405"/>
        <end position="407"/>
    </location>
</feature>
<feature type="strand" evidence="18">
    <location>
        <begin position="410"/>
        <end position="412"/>
    </location>
</feature>
<feature type="helix" evidence="11">
    <location>
        <begin position="414"/>
        <end position="425"/>
    </location>
</feature>
<feature type="helix" evidence="11">
    <location>
        <begin position="426"/>
        <end position="428"/>
    </location>
</feature>
<feature type="strand" evidence="11">
    <location>
        <begin position="429"/>
        <end position="435"/>
    </location>
</feature>
<feature type="strand" evidence="17">
    <location>
        <begin position="437"/>
        <end position="439"/>
    </location>
</feature>
<feature type="strand" evidence="10">
    <location>
        <begin position="443"/>
        <end position="445"/>
    </location>
</feature>
<feature type="strand" evidence="11">
    <location>
        <begin position="450"/>
        <end position="458"/>
    </location>
</feature>
<feature type="strand" evidence="11">
    <location>
        <begin position="462"/>
        <end position="468"/>
    </location>
</feature>
<feature type="strand" evidence="11">
    <location>
        <begin position="480"/>
        <end position="485"/>
    </location>
</feature>
<feature type="strand" evidence="16">
    <location>
        <begin position="497"/>
        <end position="499"/>
    </location>
</feature>
<feature type="helix" evidence="16">
    <location>
        <begin position="502"/>
        <end position="507"/>
    </location>
</feature>
<feature type="strand" evidence="16">
    <location>
        <begin position="509"/>
        <end position="512"/>
    </location>
</feature>
<feature type="strand" evidence="16">
    <location>
        <begin position="515"/>
        <end position="522"/>
    </location>
</feature>
<feature type="helix" evidence="16">
    <location>
        <begin position="525"/>
        <end position="530"/>
    </location>
</feature>
<feature type="helix" evidence="16">
    <location>
        <begin position="535"/>
        <end position="558"/>
    </location>
</feature>
<feature type="helix" evidence="16">
    <location>
        <begin position="562"/>
        <end position="565"/>
    </location>
</feature>
<feature type="strand" evidence="16">
    <location>
        <begin position="579"/>
        <end position="586"/>
    </location>
</feature>
<feature type="strand" evidence="16">
    <location>
        <begin position="589"/>
        <end position="595"/>
    </location>
</feature>
<feature type="helix" evidence="16">
    <location>
        <begin position="596"/>
        <end position="613"/>
    </location>
</feature>
<feature type="turn" evidence="9">
    <location>
        <begin position="614"/>
        <end position="616"/>
    </location>
</feature>
<feature type="strand" evidence="16">
    <location>
        <begin position="620"/>
        <end position="627"/>
    </location>
</feature>
<feature type="strand" evidence="9">
    <location>
        <begin position="629"/>
        <end position="631"/>
    </location>
</feature>
<feature type="helix" evidence="16">
    <location>
        <begin position="633"/>
        <end position="649"/>
    </location>
</feature>
<feature type="strand" evidence="16">
    <location>
        <begin position="652"/>
        <end position="656"/>
    </location>
</feature>
<feature type="strand" evidence="15">
    <location>
        <begin position="664"/>
        <end position="667"/>
    </location>
</feature>
<feature type="strand" evidence="16">
    <location>
        <begin position="670"/>
        <end position="673"/>
    </location>
</feature>
<feature type="helix" evidence="16">
    <location>
        <begin position="674"/>
        <end position="688"/>
    </location>
</feature>
<feature type="strand" evidence="16">
    <location>
        <begin position="689"/>
        <end position="691"/>
    </location>
</feature>
<feature type="helix" evidence="16">
    <location>
        <begin position="697"/>
        <end position="699"/>
    </location>
</feature>
<feature type="turn" evidence="16">
    <location>
        <begin position="700"/>
        <end position="703"/>
    </location>
</feature>
<feature type="helix" evidence="16">
    <location>
        <begin position="704"/>
        <end position="718"/>
    </location>
</feature>
<feature type="strand" evidence="9">
    <location>
        <begin position="720"/>
        <end position="722"/>
    </location>
</feature>
<feature type="helix" evidence="16">
    <location>
        <begin position="724"/>
        <end position="731"/>
    </location>
</feature>
<feature type="turn" evidence="13">
    <location>
        <begin position="735"/>
        <end position="737"/>
    </location>
</feature>
<feature type="strand" evidence="18">
    <location>
        <begin position="740"/>
        <end position="742"/>
    </location>
</feature>
<feature type="helix" evidence="16">
    <location>
        <begin position="743"/>
        <end position="745"/>
    </location>
</feature>
<feature type="helix" evidence="16">
    <location>
        <begin position="750"/>
        <end position="754"/>
    </location>
</feature>
<feature type="helix" evidence="16">
    <location>
        <begin position="760"/>
        <end position="762"/>
    </location>
</feature>
<feature type="helix" evidence="16">
    <location>
        <begin position="765"/>
        <end position="775"/>
    </location>
</feature>